<keyword id="KW-0002">3D-structure</keyword>
<keyword id="KW-0472">Membrane</keyword>
<keyword id="KW-0602">Photosynthesis</keyword>
<keyword id="KW-0604">Photosystem II</keyword>
<keyword id="KW-0674">Reaction center</keyword>
<keyword id="KW-1185">Reference proteome</keyword>
<keyword id="KW-0793">Thylakoid</keyword>
<keyword id="KW-0812">Transmembrane</keyword>
<keyword id="KW-1133">Transmembrane helix</keyword>
<name>PSBZ_ACAM1</name>
<sequence>MSVLFQLLIAAFVALSFAMIIGVPVVFSTGDASDDANKLIWGGAAAWVVLLFVAALASIVVI</sequence>
<accession>B0C0S7</accession>
<evidence type="ECO:0000255" key="1">
    <source>
        <dbReference type="HAMAP-Rule" id="MF_00644"/>
    </source>
</evidence>
<evidence type="ECO:0007829" key="2">
    <source>
        <dbReference type="PDB" id="7YMI"/>
    </source>
</evidence>
<gene>
    <name evidence="1" type="primary">psbZ</name>
    <name type="ordered locus">AM1_1011</name>
</gene>
<feature type="chain" id="PRO_1000082702" description="Photosystem II reaction center protein Z">
    <location>
        <begin position="1"/>
        <end position="62"/>
    </location>
</feature>
<feature type="transmembrane region" description="Helical" evidence="1">
    <location>
        <begin position="8"/>
        <end position="28"/>
    </location>
</feature>
<feature type="transmembrane region" description="Helical" evidence="1">
    <location>
        <begin position="41"/>
        <end position="61"/>
    </location>
</feature>
<feature type="helix" evidence="2">
    <location>
        <begin position="2"/>
        <end position="28"/>
    </location>
</feature>
<feature type="helix" evidence="2">
    <location>
        <begin position="30"/>
        <end position="32"/>
    </location>
</feature>
<feature type="helix" evidence="2">
    <location>
        <begin position="33"/>
        <end position="57"/>
    </location>
</feature>
<comment type="function">
    <text evidence="1">May control the interaction of photosystem II (PSII) cores with the light-harvesting antenna, regulates electron flow through the 2 photosystem reaction centers. PSII is a light-driven water plastoquinone oxidoreductase, using light energy to abstract electrons from H(2)O, generating a proton gradient subsequently used for ATP formation.</text>
</comment>
<comment type="subunit">
    <text evidence="1">PSII is composed of 1 copy each of membrane proteins PsbA, PsbB, PsbC, PsbD, PsbE, PsbF, PsbH, PsbI, PsbJ, PsbK, PsbL, PsbM, PsbT, PsbX, PsbY, PsbZ, Psb30/Ycf12, peripheral proteins PsbO, CyanoQ (PsbQ), PsbU, PsbV and a large number of cofactors. It forms dimeric complexes.</text>
</comment>
<comment type="subcellular location">
    <subcellularLocation>
        <location evidence="1">Cellular thylakoid membrane</location>
        <topology evidence="1">Multi-pass membrane protein</topology>
    </subcellularLocation>
</comment>
<comment type="similarity">
    <text evidence="1">Belongs to the PsbZ family.</text>
</comment>
<protein>
    <recommendedName>
        <fullName evidence="1">Photosystem II reaction center protein Z</fullName>
        <shortName evidence="1">PSII-Z</shortName>
    </recommendedName>
</protein>
<dbReference type="EMBL" id="CP000828">
    <property type="protein sequence ID" value="ABW26051.1"/>
    <property type="molecule type" value="Genomic_DNA"/>
</dbReference>
<dbReference type="RefSeq" id="WP_010481323.1">
    <property type="nucleotide sequence ID" value="NC_009925.1"/>
</dbReference>
<dbReference type="PDB" id="7YMI">
    <property type="method" value="EM"/>
    <property type="resolution" value="3.30 A"/>
    <property type="chains" value="Z/z=1-62"/>
</dbReference>
<dbReference type="PDB" id="7YMM">
    <property type="method" value="EM"/>
    <property type="resolution" value="3.60 A"/>
    <property type="chains" value="1Z/2Z/3Z/4Z=1-62"/>
</dbReference>
<dbReference type="PDBsum" id="7YMI"/>
<dbReference type="PDBsum" id="7YMM"/>
<dbReference type="EMDB" id="EMD-33929"/>
<dbReference type="EMDB" id="EMD-33933"/>
<dbReference type="SMR" id="B0C0S7"/>
<dbReference type="STRING" id="329726.AM1_1011"/>
<dbReference type="KEGG" id="amr:AM1_1011"/>
<dbReference type="HOGENOM" id="CLU_195286_1_0_3"/>
<dbReference type="OrthoDB" id="490783at2"/>
<dbReference type="Proteomes" id="UP000000268">
    <property type="component" value="Chromosome"/>
</dbReference>
<dbReference type="GO" id="GO:0009539">
    <property type="term" value="C:photosystem II reaction center"/>
    <property type="evidence" value="ECO:0007669"/>
    <property type="project" value="InterPro"/>
</dbReference>
<dbReference type="GO" id="GO:0031676">
    <property type="term" value="C:plasma membrane-derived thylakoid membrane"/>
    <property type="evidence" value="ECO:0007669"/>
    <property type="project" value="UniProtKB-SubCell"/>
</dbReference>
<dbReference type="GO" id="GO:0015979">
    <property type="term" value="P:photosynthesis"/>
    <property type="evidence" value="ECO:0007669"/>
    <property type="project" value="UniProtKB-UniRule"/>
</dbReference>
<dbReference type="GO" id="GO:0042549">
    <property type="term" value="P:photosystem II stabilization"/>
    <property type="evidence" value="ECO:0007669"/>
    <property type="project" value="InterPro"/>
</dbReference>
<dbReference type="Gene3D" id="1.10.287.740">
    <property type="entry name" value="Photosystem II PsbZ, reaction centre"/>
    <property type="match status" value="1"/>
</dbReference>
<dbReference type="HAMAP" id="MF_00644">
    <property type="entry name" value="PSII_PsbZ"/>
    <property type="match status" value="1"/>
</dbReference>
<dbReference type="InterPro" id="IPR002644">
    <property type="entry name" value="PSII_PsbZ"/>
</dbReference>
<dbReference type="InterPro" id="IPR036512">
    <property type="entry name" value="PSII_PsbZ_sf"/>
</dbReference>
<dbReference type="NCBIfam" id="TIGR03043">
    <property type="entry name" value="PS_II_psbZ"/>
    <property type="match status" value="1"/>
</dbReference>
<dbReference type="Pfam" id="PF01737">
    <property type="entry name" value="Ycf9"/>
    <property type="match status" value="1"/>
</dbReference>
<dbReference type="SUPFAM" id="SSF161055">
    <property type="entry name" value="PsbZ-like"/>
    <property type="match status" value="1"/>
</dbReference>
<reference key="1">
    <citation type="journal article" date="2008" name="Proc. Natl. Acad. Sci. U.S.A.">
        <title>Niche adaptation and genome expansion in the chlorophyll d-producing cyanobacterium Acaryochloris marina.</title>
        <authorList>
            <person name="Swingley W.D."/>
            <person name="Chen M."/>
            <person name="Cheung P.C."/>
            <person name="Conrad A.L."/>
            <person name="Dejesa L.C."/>
            <person name="Hao J."/>
            <person name="Honchak B.M."/>
            <person name="Karbach L.E."/>
            <person name="Kurdoglu A."/>
            <person name="Lahiri S."/>
            <person name="Mastrian S.D."/>
            <person name="Miyashita H."/>
            <person name="Page L."/>
            <person name="Ramakrishna P."/>
            <person name="Satoh S."/>
            <person name="Sattley W.M."/>
            <person name="Shimada Y."/>
            <person name="Taylor H.L."/>
            <person name="Tomo T."/>
            <person name="Tsuchiya T."/>
            <person name="Wang Z.T."/>
            <person name="Raymond J."/>
            <person name="Mimuro M."/>
            <person name="Blankenship R.E."/>
            <person name="Touchman J.W."/>
        </authorList>
    </citation>
    <scope>NUCLEOTIDE SEQUENCE [LARGE SCALE GENOMIC DNA]</scope>
    <source>
        <strain>MBIC 11017</strain>
    </source>
</reference>
<proteinExistence type="evidence at protein level"/>
<organism>
    <name type="scientific">Acaryochloris marina (strain MBIC 11017)</name>
    <dbReference type="NCBI Taxonomy" id="329726"/>
    <lineage>
        <taxon>Bacteria</taxon>
        <taxon>Bacillati</taxon>
        <taxon>Cyanobacteriota</taxon>
        <taxon>Cyanophyceae</taxon>
        <taxon>Acaryochloridales</taxon>
        <taxon>Acaryochloridaceae</taxon>
        <taxon>Acaryochloris</taxon>
    </lineage>
</organism>